<proteinExistence type="inferred from homology"/>
<evidence type="ECO:0000255" key="1">
    <source>
        <dbReference type="HAMAP-Rule" id="MF_00019"/>
    </source>
</evidence>
<accession>Q5X5H3</accession>
<organism>
    <name type="scientific">Legionella pneumophila (strain Paris)</name>
    <dbReference type="NCBI Taxonomy" id="297246"/>
    <lineage>
        <taxon>Bacteria</taxon>
        <taxon>Pseudomonadati</taxon>
        <taxon>Pseudomonadota</taxon>
        <taxon>Gammaproteobacteria</taxon>
        <taxon>Legionellales</taxon>
        <taxon>Legionellaceae</taxon>
        <taxon>Legionella</taxon>
    </lineage>
</organism>
<feature type="chain" id="PRO_0000189893" description="Phosphate acyltransferase">
    <location>
        <begin position="1"/>
        <end position="342"/>
    </location>
</feature>
<keyword id="KW-0963">Cytoplasm</keyword>
<keyword id="KW-0444">Lipid biosynthesis</keyword>
<keyword id="KW-0443">Lipid metabolism</keyword>
<keyword id="KW-0594">Phospholipid biosynthesis</keyword>
<keyword id="KW-1208">Phospholipid metabolism</keyword>
<keyword id="KW-0808">Transferase</keyword>
<gene>
    <name evidence="1" type="primary">plsX</name>
    <name type="ordered locus">lpp1347</name>
</gene>
<name>PLSX_LEGPA</name>
<reference key="1">
    <citation type="journal article" date="2004" name="Nat. Genet.">
        <title>Evidence in the Legionella pneumophila genome for exploitation of host cell functions and high genome plasticity.</title>
        <authorList>
            <person name="Cazalet C."/>
            <person name="Rusniok C."/>
            <person name="Brueggemann H."/>
            <person name="Zidane N."/>
            <person name="Magnier A."/>
            <person name="Ma L."/>
            <person name="Tichit M."/>
            <person name="Jarraud S."/>
            <person name="Bouchier C."/>
            <person name="Vandenesch F."/>
            <person name="Kunst F."/>
            <person name="Etienne J."/>
            <person name="Glaser P."/>
            <person name="Buchrieser C."/>
        </authorList>
    </citation>
    <scope>NUCLEOTIDE SEQUENCE [LARGE SCALE GENOMIC DNA]</scope>
    <source>
        <strain>Paris</strain>
    </source>
</reference>
<dbReference type="EC" id="2.3.1.274" evidence="1"/>
<dbReference type="EMBL" id="CR628336">
    <property type="protein sequence ID" value="CAH12498.1"/>
    <property type="molecule type" value="Genomic_DNA"/>
</dbReference>
<dbReference type="RefSeq" id="WP_010947122.1">
    <property type="nucleotide sequence ID" value="NC_006368.1"/>
</dbReference>
<dbReference type="SMR" id="Q5X5H3"/>
<dbReference type="GeneID" id="57035382"/>
<dbReference type="KEGG" id="lpp:lpp1347"/>
<dbReference type="LegioList" id="lpp1347"/>
<dbReference type="HOGENOM" id="CLU_039379_1_1_6"/>
<dbReference type="UniPathway" id="UPA00085"/>
<dbReference type="GO" id="GO:0005737">
    <property type="term" value="C:cytoplasm"/>
    <property type="evidence" value="ECO:0007669"/>
    <property type="project" value="UniProtKB-SubCell"/>
</dbReference>
<dbReference type="GO" id="GO:0043811">
    <property type="term" value="F:phosphate:acyl-[acyl carrier protein] acyltransferase activity"/>
    <property type="evidence" value="ECO:0007669"/>
    <property type="project" value="UniProtKB-UniRule"/>
</dbReference>
<dbReference type="GO" id="GO:0006633">
    <property type="term" value="P:fatty acid biosynthetic process"/>
    <property type="evidence" value="ECO:0007669"/>
    <property type="project" value="UniProtKB-UniRule"/>
</dbReference>
<dbReference type="GO" id="GO:0008654">
    <property type="term" value="P:phospholipid biosynthetic process"/>
    <property type="evidence" value="ECO:0007669"/>
    <property type="project" value="UniProtKB-KW"/>
</dbReference>
<dbReference type="Gene3D" id="3.40.718.10">
    <property type="entry name" value="Isopropylmalate Dehydrogenase"/>
    <property type="match status" value="1"/>
</dbReference>
<dbReference type="HAMAP" id="MF_00019">
    <property type="entry name" value="PlsX"/>
    <property type="match status" value="1"/>
</dbReference>
<dbReference type="InterPro" id="IPR003664">
    <property type="entry name" value="FA_synthesis"/>
</dbReference>
<dbReference type="InterPro" id="IPR012281">
    <property type="entry name" value="Phospholipid_synth_PlsX-like"/>
</dbReference>
<dbReference type="NCBIfam" id="TIGR00182">
    <property type="entry name" value="plsX"/>
    <property type="match status" value="1"/>
</dbReference>
<dbReference type="PANTHER" id="PTHR30100">
    <property type="entry name" value="FATTY ACID/PHOSPHOLIPID SYNTHESIS PROTEIN PLSX"/>
    <property type="match status" value="1"/>
</dbReference>
<dbReference type="PANTHER" id="PTHR30100:SF1">
    <property type="entry name" value="PHOSPHATE ACYLTRANSFERASE"/>
    <property type="match status" value="1"/>
</dbReference>
<dbReference type="Pfam" id="PF02504">
    <property type="entry name" value="FA_synthesis"/>
    <property type="match status" value="1"/>
</dbReference>
<dbReference type="PIRSF" id="PIRSF002465">
    <property type="entry name" value="Phsphlp_syn_PlsX"/>
    <property type="match status" value="1"/>
</dbReference>
<dbReference type="SUPFAM" id="SSF53659">
    <property type="entry name" value="Isocitrate/Isopropylmalate dehydrogenase-like"/>
    <property type="match status" value="1"/>
</dbReference>
<sequence>MKNITIAIDAMGGDHGLEIVIPACIRAIKNNPDLKLLLVGVQDKISASLKKHGMLSCQQFTIVHASEVVTMDELPSHALRNKKDSSMRIAINLVKEGRAQACVSAGNTGALMATARYVLKTLPGIDRPAIVSELPTMGGKTRVIDLGANVDSCAEHLFQFAVMGSALIQAIENKPKPKIGLLNIGVEEIKGNDQVKRTAHMLAECSVMNYVGYVEGDHFYSGDVDLVVCDGFVGNVALKASEGLAKLLLTVLKESFSRNWLTKIAGLIALPALKHLKNRLDPSRYNGASLLGLNGIVVKSHGGANEVGFQHAIEQAVLEVKNNVVDLVRDQINDFINQGLLL</sequence>
<comment type="function">
    <text evidence="1">Catalyzes the reversible formation of acyl-phosphate (acyl-PO(4)) from acyl-[acyl-carrier-protein] (acyl-ACP). This enzyme utilizes acyl-ACP as fatty acyl donor, but not acyl-CoA.</text>
</comment>
<comment type="catalytic activity">
    <reaction evidence="1">
        <text>a fatty acyl-[ACP] + phosphate = an acyl phosphate + holo-[ACP]</text>
        <dbReference type="Rhea" id="RHEA:42292"/>
        <dbReference type="Rhea" id="RHEA-COMP:9685"/>
        <dbReference type="Rhea" id="RHEA-COMP:14125"/>
        <dbReference type="ChEBI" id="CHEBI:43474"/>
        <dbReference type="ChEBI" id="CHEBI:59918"/>
        <dbReference type="ChEBI" id="CHEBI:64479"/>
        <dbReference type="ChEBI" id="CHEBI:138651"/>
        <dbReference type="EC" id="2.3.1.274"/>
    </reaction>
</comment>
<comment type="pathway">
    <text evidence="1">Lipid metabolism; phospholipid metabolism.</text>
</comment>
<comment type="subunit">
    <text evidence="1">Homodimer. Probably interacts with PlsY.</text>
</comment>
<comment type="subcellular location">
    <subcellularLocation>
        <location evidence="1">Cytoplasm</location>
    </subcellularLocation>
    <text evidence="1">Associated with the membrane possibly through PlsY.</text>
</comment>
<comment type="similarity">
    <text evidence="1">Belongs to the PlsX family.</text>
</comment>
<protein>
    <recommendedName>
        <fullName evidence="1">Phosphate acyltransferase</fullName>
        <ecNumber evidence="1">2.3.1.274</ecNumber>
    </recommendedName>
    <alternativeName>
        <fullName evidence="1">Acyl-ACP phosphotransacylase</fullName>
    </alternativeName>
    <alternativeName>
        <fullName evidence="1">Acyl-[acyl-carrier-protein]--phosphate acyltransferase</fullName>
    </alternativeName>
    <alternativeName>
        <fullName evidence="1">Phosphate-acyl-ACP acyltransferase</fullName>
    </alternativeName>
</protein>